<organism>
    <name type="scientific">Acanthamoeba polyphaga mimivirus</name>
    <name type="common">APMV</name>
    <dbReference type="NCBI Taxonomy" id="212035"/>
    <lineage>
        <taxon>Viruses</taxon>
        <taxon>Varidnaviria</taxon>
        <taxon>Bamfordvirae</taxon>
        <taxon>Nucleocytoviricota</taxon>
        <taxon>Megaviricetes</taxon>
        <taxon>Imitervirales</taxon>
        <taxon>Mimiviridae</taxon>
        <taxon>Megamimivirinae</taxon>
        <taxon>Mimivirus</taxon>
        <taxon>Mimivirus bradfordmassiliense</taxon>
    </lineage>
</organism>
<sequence length="164" mass="19414">MDITKHLKPNLVDPNIEESIIKKLKPPVEDYWAPTKSGLHKFYHNFIRPNIYLIIFIIIVLLLLYYRYRRVKADKEKEKLEDTDKEFDKSTNNDTNSKKIYHRQKNSKTLNSSKKQSIDDTELLLQLYNLNKENLREPPITKSNFAYPMYPYHKGGTLISPGSR</sequence>
<reference key="1">
    <citation type="journal article" date="2004" name="Science">
        <title>The 1.2-megabase genome sequence of Mimivirus.</title>
        <authorList>
            <person name="Raoult D."/>
            <person name="Audic S."/>
            <person name="Robert C."/>
            <person name="Abergel C."/>
            <person name="Renesto P."/>
            <person name="Ogata H."/>
            <person name="La Scola B."/>
            <person name="Susan M."/>
            <person name="Claverie J.-M."/>
        </authorList>
    </citation>
    <scope>NUCLEOTIDE SEQUENCE [LARGE SCALE GENOMIC DNA]</scope>
    <source>
        <strain>Rowbotham-Bradford</strain>
    </source>
</reference>
<proteinExistence type="predicted"/>
<accession>Q5UPZ4</accession>
<keyword id="KW-0175">Coiled coil</keyword>
<keyword id="KW-0472">Membrane</keyword>
<keyword id="KW-1185">Reference proteome</keyword>
<keyword id="KW-0812">Transmembrane</keyword>
<keyword id="KW-1133">Transmembrane helix</keyword>
<dbReference type="EMBL" id="AY653733">
    <property type="protein sequence ID" value="AAV50582.1"/>
    <property type="molecule type" value="Genomic_DNA"/>
</dbReference>
<dbReference type="SMR" id="Q5UPZ4"/>
<dbReference type="KEGG" id="vg:9924927"/>
<dbReference type="OrthoDB" id="28517at10239"/>
<dbReference type="Proteomes" id="UP000001134">
    <property type="component" value="Genome"/>
</dbReference>
<dbReference type="GO" id="GO:0016020">
    <property type="term" value="C:membrane"/>
    <property type="evidence" value="ECO:0007669"/>
    <property type="project" value="UniProtKB-SubCell"/>
</dbReference>
<protein>
    <recommendedName>
        <fullName>Uncharacterized protein L310</fullName>
    </recommendedName>
</protein>
<evidence type="ECO:0000255" key="1"/>
<evidence type="ECO:0000256" key="2">
    <source>
        <dbReference type="SAM" id="MobiDB-lite"/>
    </source>
</evidence>
<evidence type="ECO:0000305" key="3"/>
<comment type="subcellular location">
    <subcellularLocation>
        <location evidence="3">Membrane</location>
        <topology evidence="3">Single-pass membrane protein</topology>
    </subcellularLocation>
</comment>
<organismHost>
    <name type="scientific">Acanthamoeba polyphaga</name>
    <name type="common">Amoeba</name>
    <dbReference type="NCBI Taxonomy" id="5757"/>
</organismHost>
<feature type="chain" id="PRO_0000243962" description="Uncharacterized protein L310">
    <location>
        <begin position="1"/>
        <end position="164"/>
    </location>
</feature>
<feature type="transmembrane region" description="Helical" evidence="1">
    <location>
        <begin position="46"/>
        <end position="66"/>
    </location>
</feature>
<feature type="region of interest" description="Disordered" evidence="2">
    <location>
        <begin position="76"/>
        <end position="114"/>
    </location>
</feature>
<feature type="coiled-coil region" evidence="1">
    <location>
        <begin position="72"/>
        <end position="137"/>
    </location>
</feature>
<feature type="compositionally biased region" description="Basic and acidic residues" evidence="2">
    <location>
        <begin position="76"/>
        <end position="91"/>
    </location>
</feature>
<gene>
    <name type="ordered locus">MIMI_L310</name>
</gene>
<name>YL310_MIMIV</name>